<reference key="1">
    <citation type="journal article" date="2006" name="Nat. Biotechnol.">
        <title>Complete genome sequence of the entomopathogenic and metabolically versatile soil bacterium Pseudomonas entomophila.</title>
        <authorList>
            <person name="Vodovar N."/>
            <person name="Vallenet D."/>
            <person name="Cruveiller S."/>
            <person name="Rouy Z."/>
            <person name="Barbe V."/>
            <person name="Acosta C."/>
            <person name="Cattolico L."/>
            <person name="Jubin C."/>
            <person name="Lajus A."/>
            <person name="Segurens B."/>
            <person name="Vacherie B."/>
            <person name="Wincker P."/>
            <person name="Weissenbach J."/>
            <person name="Lemaitre B."/>
            <person name="Medigue C."/>
            <person name="Boccard F."/>
        </authorList>
    </citation>
    <scope>NUCLEOTIDE SEQUENCE [LARGE SCALE GENOMIC DNA]</scope>
    <source>
        <strain>L48</strain>
    </source>
</reference>
<evidence type="ECO:0000255" key="1">
    <source>
        <dbReference type="HAMAP-Rule" id="MF_00291"/>
    </source>
</evidence>
<evidence type="ECO:0000305" key="2"/>
<feature type="chain" id="PRO_1000004031" description="Small ribosomal subunit protein uS2">
    <location>
        <begin position="1"/>
        <end position="245"/>
    </location>
</feature>
<comment type="similarity">
    <text evidence="1">Belongs to the universal ribosomal protein uS2 family.</text>
</comment>
<accession>Q1I626</accession>
<name>RS2_PSEE4</name>
<dbReference type="EMBL" id="CT573326">
    <property type="protein sequence ID" value="CAK16909.1"/>
    <property type="molecule type" value="Genomic_DNA"/>
</dbReference>
<dbReference type="RefSeq" id="WP_011535280.1">
    <property type="nucleotide sequence ID" value="NC_008027.1"/>
</dbReference>
<dbReference type="SMR" id="Q1I626"/>
<dbReference type="STRING" id="384676.PSEEN4220"/>
<dbReference type="GeneID" id="49616099"/>
<dbReference type="KEGG" id="pen:PSEEN4220"/>
<dbReference type="eggNOG" id="COG0052">
    <property type="taxonomic scope" value="Bacteria"/>
</dbReference>
<dbReference type="HOGENOM" id="CLU_040318_1_0_6"/>
<dbReference type="OrthoDB" id="9808036at2"/>
<dbReference type="Proteomes" id="UP000000658">
    <property type="component" value="Chromosome"/>
</dbReference>
<dbReference type="GO" id="GO:0022627">
    <property type="term" value="C:cytosolic small ribosomal subunit"/>
    <property type="evidence" value="ECO:0007669"/>
    <property type="project" value="TreeGrafter"/>
</dbReference>
<dbReference type="GO" id="GO:0003735">
    <property type="term" value="F:structural constituent of ribosome"/>
    <property type="evidence" value="ECO:0007669"/>
    <property type="project" value="InterPro"/>
</dbReference>
<dbReference type="GO" id="GO:0006412">
    <property type="term" value="P:translation"/>
    <property type="evidence" value="ECO:0007669"/>
    <property type="project" value="UniProtKB-UniRule"/>
</dbReference>
<dbReference type="CDD" id="cd01425">
    <property type="entry name" value="RPS2"/>
    <property type="match status" value="1"/>
</dbReference>
<dbReference type="FunFam" id="1.10.287.610:FF:000001">
    <property type="entry name" value="30S ribosomal protein S2"/>
    <property type="match status" value="1"/>
</dbReference>
<dbReference type="Gene3D" id="3.40.50.10490">
    <property type="entry name" value="Glucose-6-phosphate isomerase like protein, domain 1"/>
    <property type="match status" value="1"/>
</dbReference>
<dbReference type="Gene3D" id="1.10.287.610">
    <property type="entry name" value="Helix hairpin bin"/>
    <property type="match status" value="1"/>
</dbReference>
<dbReference type="HAMAP" id="MF_00291_B">
    <property type="entry name" value="Ribosomal_uS2_B"/>
    <property type="match status" value="1"/>
</dbReference>
<dbReference type="InterPro" id="IPR001865">
    <property type="entry name" value="Ribosomal_uS2"/>
</dbReference>
<dbReference type="InterPro" id="IPR005706">
    <property type="entry name" value="Ribosomal_uS2_bac/mit/plastid"/>
</dbReference>
<dbReference type="InterPro" id="IPR018130">
    <property type="entry name" value="Ribosomal_uS2_CS"/>
</dbReference>
<dbReference type="InterPro" id="IPR023591">
    <property type="entry name" value="Ribosomal_uS2_flav_dom_sf"/>
</dbReference>
<dbReference type="NCBIfam" id="TIGR01011">
    <property type="entry name" value="rpsB_bact"/>
    <property type="match status" value="1"/>
</dbReference>
<dbReference type="PANTHER" id="PTHR12534">
    <property type="entry name" value="30S RIBOSOMAL PROTEIN S2 PROKARYOTIC AND ORGANELLAR"/>
    <property type="match status" value="1"/>
</dbReference>
<dbReference type="PANTHER" id="PTHR12534:SF0">
    <property type="entry name" value="SMALL RIBOSOMAL SUBUNIT PROTEIN US2M"/>
    <property type="match status" value="1"/>
</dbReference>
<dbReference type="Pfam" id="PF00318">
    <property type="entry name" value="Ribosomal_S2"/>
    <property type="match status" value="1"/>
</dbReference>
<dbReference type="PRINTS" id="PR00395">
    <property type="entry name" value="RIBOSOMALS2"/>
</dbReference>
<dbReference type="SUPFAM" id="SSF52313">
    <property type="entry name" value="Ribosomal protein S2"/>
    <property type="match status" value="1"/>
</dbReference>
<dbReference type="PROSITE" id="PS00962">
    <property type="entry name" value="RIBOSOMAL_S2_1"/>
    <property type="match status" value="1"/>
</dbReference>
<dbReference type="PROSITE" id="PS00963">
    <property type="entry name" value="RIBOSOMAL_S2_2"/>
    <property type="match status" value="1"/>
</dbReference>
<gene>
    <name evidence="1" type="primary">rpsB</name>
    <name type="ordered locus">PSEEN4220</name>
</gene>
<organism>
    <name type="scientific">Pseudomonas entomophila (strain L48)</name>
    <dbReference type="NCBI Taxonomy" id="384676"/>
    <lineage>
        <taxon>Bacteria</taxon>
        <taxon>Pseudomonadati</taxon>
        <taxon>Pseudomonadota</taxon>
        <taxon>Gammaproteobacteria</taxon>
        <taxon>Pseudomonadales</taxon>
        <taxon>Pseudomonadaceae</taxon>
        <taxon>Pseudomonas</taxon>
    </lineage>
</organism>
<sequence length="245" mass="27009">MSQVNMRDMLKAGVHFGHQTRYWNPKMGKYIFGARNKIHIINLEKTLPMFNDALAFVERLAQGKNKIMFVGTKRSAGKIVAEQAARCGSPYVDHRWLGGMLTNYKTIRASIKRLRDLETQAEDGTFAKLTKKEALMRSRDLEKLDRSLGGIKDMGGLPDALFVIDVDHERIAITEANKLGIPVIGVVDTNSSPEGVDFVIPGNDDAIRAIELYMTSMADAVIRGRNNVAGGTEVYAEEAAAPAAE</sequence>
<proteinExistence type="inferred from homology"/>
<protein>
    <recommendedName>
        <fullName evidence="1">Small ribosomal subunit protein uS2</fullName>
    </recommendedName>
    <alternativeName>
        <fullName evidence="2">30S ribosomal protein S2</fullName>
    </alternativeName>
</protein>
<keyword id="KW-0687">Ribonucleoprotein</keyword>
<keyword id="KW-0689">Ribosomal protein</keyword>